<evidence type="ECO:0000255" key="1">
    <source>
        <dbReference type="HAMAP-Rule" id="MF_01077"/>
    </source>
</evidence>
<dbReference type="EMBL" id="CP001191">
    <property type="protein sequence ID" value="ACI57332.1"/>
    <property type="molecule type" value="Genomic_DNA"/>
</dbReference>
<dbReference type="RefSeq" id="WP_012559489.1">
    <property type="nucleotide sequence ID" value="NC_011369.1"/>
</dbReference>
<dbReference type="SMR" id="B5ZW32"/>
<dbReference type="STRING" id="395492.Rleg2_4070"/>
<dbReference type="KEGG" id="rlt:Rleg2_4070"/>
<dbReference type="eggNOG" id="COG0779">
    <property type="taxonomic scope" value="Bacteria"/>
</dbReference>
<dbReference type="HOGENOM" id="CLU_070525_0_1_5"/>
<dbReference type="Proteomes" id="UP000008330">
    <property type="component" value="Chromosome"/>
</dbReference>
<dbReference type="GO" id="GO:0005829">
    <property type="term" value="C:cytosol"/>
    <property type="evidence" value="ECO:0007669"/>
    <property type="project" value="TreeGrafter"/>
</dbReference>
<dbReference type="GO" id="GO:0000028">
    <property type="term" value="P:ribosomal small subunit assembly"/>
    <property type="evidence" value="ECO:0007669"/>
    <property type="project" value="TreeGrafter"/>
</dbReference>
<dbReference type="GO" id="GO:0006412">
    <property type="term" value="P:translation"/>
    <property type="evidence" value="ECO:0007669"/>
    <property type="project" value="TreeGrafter"/>
</dbReference>
<dbReference type="CDD" id="cd01734">
    <property type="entry name" value="YlxS_C"/>
    <property type="match status" value="1"/>
</dbReference>
<dbReference type="Gene3D" id="2.30.30.180">
    <property type="entry name" value="Ribosome maturation factor RimP, C-terminal domain"/>
    <property type="match status" value="1"/>
</dbReference>
<dbReference type="Gene3D" id="3.30.300.70">
    <property type="entry name" value="RimP-like superfamily, N-terminal"/>
    <property type="match status" value="1"/>
</dbReference>
<dbReference type="HAMAP" id="MF_01077">
    <property type="entry name" value="RimP"/>
    <property type="match status" value="1"/>
</dbReference>
<dbReference type="InterPro" id="IPR003728">
    <property type="entry name" value="Ribosome_maturation_RimP"/>
</dbReference>
<dbReference type="InterPro" id="IPR028998">
    <property type="entry name" value="RimP_C"/>
</dbReference>
<dbReference type="InterPro" id="IPR036847">
    <property type="entry name" value="RimP_C_sf"/>
</dbReference>
<dbReference type="InterPro" id="IPR028989">
    <property type="entry name" value="RimP_N"/>
</dbReference>
<dbReference type="InterPro" id="IPR035956">
    <property type="entry name" value="RimP_N_sf"/>
</dbReference>
<dbReference type="NCBIfam" id="NF000932">
    <property type="entry name" value="PRK00092.2-5"/>
    <property type="match status" value="1"/>
</dbReference>
<dbReference type="PANTHER" id="PTHR33867">
    <property type="entry name" value="RIBOSOME MATURATION FACTOR RIMP"/>
    <property type="match status" value="1"/>
</dbReference>
<dbReference type="PANTHER" id="PTHR33867:SF1">
    <property type="entry name" value="RIBOSOME MATURATION FACTOR RIMP"/>
    <property type="match status" value="1"/>
</dbReference>
<dbReference type="Pfam" id="PF17384">
    <property type="entry name" value="DUF150_C"/>
    <property type="match status" value="1"/>
</dbReference>
<dbReference type="Pfam" id="PF02576">
    <property type="entry name" value="RimP_N"/>
    <property type="match status" value="1"/>
</dbReference>
<dbReference type="SUPFAM" id="SSF74942">
    <property type="entry name" value="YhbC-like, C-terminal domain"/>
    <property type="match status" value="1"/>
</dbReference>
<dbReference type="SUPFAM" id="SSF75420">
    <property type="entry name" value="YhbC-like, N-terminal domain"/>
    <property type="match status" value="1"/>
</dbReference>
<gene>
    <name evidence="1" type="primary">rimP</name>
    <name type="ordered locus">Rleg2_4070</name>
</gene>
<organism>
    <name type="scientific">Rhizobium leguminosarum bv. trifolii (strain WSM2304)</name>
    <dbReference type="NCBI Taxonomy" id="395492"/>
    <lineage>
        <taxon>Bacteria</taxon>
        <taxon>Pseudomonadati</taxon>
        <taxon>Pseudomonadota</taxon>
        <taxon>Alphaproteobacteria</taxon>
        <taxon>Hyphomicrobiales</taxon>
        <taxon>Rhizobiaceae</taxon>
        <taxon>Rhizobium/Agrobacterium group</taxon>
        <taxon>Rhizobium</taxon>
    </lineage>
</organism>
<feature type="chain" id="PRO_1000136791" description="Ribosome maturation factor RimP">
    <location>
        <begin position="1"/>
        <end position="201"/>
    </location>
</feature>
<proteinExistence type="inferred from homology"/>
<reference key="1">
    <citation type="journal article" date="2010" name="Stand. Genomic Sci.">
        <title>Complete genome sequence of Rhizobium leguminosarum bv trifolii strain WSM2304, an effective microsymbiont of the South American clover Trifolium polymorphum.</title>
        <authorList>
            <person name="Reeve W."/>
            <person name="O'Hara G."/>
            <person name="Chain P."/>
            <person name="Ardley J."/>
            <person name="Brau L."/>
            <person name="Nandesena K."/>
            <person name="Tiwari R."/>
            <person name="Malfatti S."/>
            <person name="Kiss H."/>
            <person name="Lapidus A."/>
            <person name="Copeland A."/>
            <person name="Nolan M."/>
            <person name="Land M."/>
            <person name="Ivanova N."/>
            <person name="Mavromatis K."/>
            <person name="Markowitz V."/>
            <person name="Kyrpides N."/>
            <person name="Melino V."/>
            <person name="Denton M."/>
            <person name="Yates R."/>
            <person name="Howieson J."/>
        </authorList>
    </citation>
    <scope>NUCLEOTIDE SEQUENCE [LARGE SCALE GENOMIC DNA]</scope>
    <source>
        <strain>WSM2304</strain>
    </source>
</reference>
<protein>
    <recommendedName>
        <fullName evidence="1">Ribosome maturation factor RimP</fullName>
    </recommendedName>
</protein>
<keyword id="KW-0963">Cytoplasm</keyword>
<keyword id="KW-1185">Reference proteome</keyword>
<keyword id="KW-0690">Ribosome biogenesis</keyword>
<comment type="function">
    <text evidence="1">Required for maturation of 30S ribosomal subunits.</text>
</comment>
<comment type="subcellular location">
    <subcellularLocation>
        <location evidence="1">Cytoplasm</location>
    </subcellularLocation>
</comment>
<comment type="similarity">
    <text evidence="1">Belongs to the RimP family.</text>
</comment>
<sequence>MSDMTNAGNELEPRLITETGLDQRLADIIEPVLIGIGFRLIRVRMLNQNGVTMQVMAERNDGTMTVQDCEEVSMAISPVLDVEDPVDKEYHLEVSSPGIDRPMVRKSDFVRWQGHLVKCETSILIDNRKRFRGKIVEAGVDGFTLERDQVAYGEEQKVTIPFTALSDAKLILTDDLIRDALRADKLAKAEAANQNEADDQE</sequence>
<name>RIMP_RHILW</name>
<accession>B5ZW32</accession>